<name>SYFA_CUTAK</name>
<evidence type="ECO:0000255" key="1">
    <source>
        <dbReference type="HAMAP-Rule" id="MF_00281"/>
    </source>
</evidence>
<keyword id="KW-0030">Aminoacyl-tRNA synthetase</keyword>
<keyword id="KW-0067">ATP-binding</keyword>
<keyword id="KW-0963">Cytoplasm</keyword>
<keyword id="KW-0436">Ligase</keyword>
<keyword id="KW-0460">Magnesium</keyword>
<keyword id="KW-0479">Metal-binding</keyword>
<keyword id="KW-0547">Nucleotide-binding</keyword>
<keyword id="KW-0648">Protein biosynthesis</keyword>
<gene>
    <name evidence="1" type="primary">pheS</name>
    <name type="ordered locus">PPA1409</name>
</gene>
<sequence length="369" mass="40148">MSGPNTNYDPVQVSALDADQVEARVAEALEAIARASTTAELKQVRITHTGDRSALALANREIGALPPAARKDAGKRIGQARGRVNQALKARQQELAEAELEARLAAETTDVTLPVVTSPQGAPHPITALIDNVCDVFTAMGWEVAEGPEAESEWFNFDALNLGTDHPARALQDTLWLDPVDDGKCMRTATSPVQIHTLLKQQPPVRIISPGKVFRADEYDATHLPVFHQVEGLCVDKGITMGHLKGTVDAFARAMFGAVRTRFRPHYFPFTEPSAEVDLECFVCHGASVGNPDRPCRTCRSEGWIEWGGCGVVNPRVLIACGIDTDVYSGFAFGMGIDRTVMFRNNAPDLRDFVEGDVRFSRSLRGGAR</sequence>
<protein>
    <recommendedName>
        <fullName evidence="1">Phenylalanine--tRNA ligase alpha subunit</fullName>
        <ecNumber evidence="1">6.1.1.20</ecNumber>
    </recommendedName>
    <alternativeName>
        <fullName evidence="1">Phenylalanyl-tRNA synthetase alpha subunit</fullName>
        <shortName evidence="1">PheRS</shortName>
    </alternativeName>
</protein>
<feature type="chain" id="PRO_0000232011" description="Phenylalanine--tRNA ligase alpha subunit">
    <location>
        <begin position="1"/>
        <end position="369"/>
    </location>
</feature>
<feature type="binding site" evidence="1">
    <location>
        <position position="272"/>
    </location>
    <ligand>
        <name>Mg(2+)</name>
        <dbReference type="ChEBI" id="CHEBI:18420"/>
        <note>shared with beta subunit</note>
    </ligand>
</feature>
<comment type="catalytic activity">
    <reaction evidence="1">
        <text>tRNA(Phe) + L-phenylalanine + ATP = L-phenylalanyl-tRNA(Phe) + AMP + diphosphate + H(+)</text>
        <dbReference type="Rhea" id="RHEA:19413"/>
        <dbReference type="Rhea" id="RHEA-COMP:9668"/>
        <dbReference type="Rhea" id="RHEA-COMP:9699"/>
        <dbReference type="ChEBI" id="CHEBI:15378"/>
        <dbReference type="ChEBI" id="CHEBI:30616"/>
        <dbReference type="ChEBI" id="CHEBI:33019"/>
        <dbReference type="ChEBI" id="CHEBI:58095"/>
        <dbReference type="ChEBI" id="CHEBI:78442"/>
        <dbReference type="ChEBI" id="CHEBI:78531"/>
        <dbReference type="ChEBI" id="CHEBI:456215"/>
        <dbReference type="EC" id="6.1.1.20"/>
    </reaction>
</comment>
<comment type="cofactor">
    <cofactor evidence="1">
        <name>Mg(2+)</name>
        <dbReference type="ChEBI" id="CHEBI:18420"/>
    </cofactor>
    <text evidence="1">Binds 2 magnesium ions per tetramer.</text>
</comment>
<comment type="subunit">
    <text evidence="1">Tetramer of two alpha and two beta subunits.</text>
</comment>
<comment type="subcellular location">
    <subcellularLocation>
        <location evidence="1">Cytoplasm</location>
    </subcellularLocation>
</comment>
<comment type="similarity">
    <text evidence="1">Belongs to the class-II aminoacyl-tRNA synthetase family. Phe-tRNA synthetase alpha subunit type 1 subfamily.</text>
</comment>
<accession>Q6A7V5</accession>
<proteinExistence type="inferred from homology"/>
<dbReference type="EC" id="6.1.1.20" evidence="1"/>
<dbReference type="EMBL" id="AE017283">
    <property type="protein sequence ID" value="AAT83160.1"/>
    <property type="molecule type" value="Genomic_DNA"/>
</dbReference>
<dbReference type="RefSeq" id="WP_002514219.1">
    <property type="nucleotide sequence ID" value="NZ_CP025935.1"/>
</dbReference>
<dbReference type="SMR" id="Q6A7V5"/>
<dbReference type="EnsemblBacteria" id="AAT83160">
    <property type="protein sequence ID" value="AAT83160"/>
    <property type="gene ID" value="PPA1409"/>
</dbReference>
<dbReference type="GeneID" id="92857386"/>
<dbReference type="KEGG" id="pac:PPA1409"/>
<dbReference type="eggNOG" id="COG0016">
    <property type="taxonomic scope" value="Bacteria"/>
</dbReference>
<dbReference type="HOGENOM" id="CLU_025086_0_0_11"/>
<dbReference type="Proteomes" id="UP000000603">
    <property type="component" value="Chromosome"/>
</dbReference>
<dbReference type="GO" id="GO:0005737">
    <property type="term" value="C:cytoplasm"/>
    <property type="evidence" value="ECO:0007669"/>
    <property type="project" value="UniProtKB-SubCell"/>
</dbReference>
<dbReference type="GO" id="GO:0005524">
    <property type="term" value="F:ATP binding"/>
    <property type="evidence" value="ECO:0007669"/>
    <property type="project" value="UniProtKB-UniRule"/>
</dbReference>
<dbReference type="GO" id="GO:0000287">
    <property type="term" value="F:magnesium ion binding"/>
    <property type="evidence" value="ECO:0007669"/>
    <property type="project" value="UniProtKB-UniRule"/>
</dbReference>
<dbReference type="GO" id="GO:0004826">
    <property type="term" value="F:phenylalanine-tRNA ligase activity"/>
    <property type="evidence" value="ECO:0007669"/>
    <property type="project" value="UniProtKB-UniRule"/>
</dbReference>
<dbReference type="GO" id="GO:0000049">
    <property type="term" value="F:tRNA binding"/>
    <property type="evidence" value="ECO:0007669"/>
    <property type="project" value="InterPro"/>
</dbReference>
<dbReference type="GO" id="GO:0006432">
    <property type="term" value="P:phenylalanyl-tRNA aminoacylation"/>
    <property type="evidence" value="ECO:0007669"/>
    <property type="project" value="UniProtKB-UniRule"/>
</dbReference>
<dbReference type="CDD" id="cd00496">
    <property type="entry name" value="PheRS_alpha_core"/>
    <property type="match status" value="1"/>
</dbReference>
<dbReference type="Gene3D" id="3.30.930.10">
    <property type="entry name" value="Bira Bifunctional Protein, Domain 2"/>
    <property type="match status" value="1"/>
</dbReference>
<dbReference type="HAMAP" id="MF_00281">
    <property type="entry name" value="Phe_tRNA_synth_alpha1"/>
    <property type="match status" value="1"/>
</dbReference>
<dbReference type="InterPro" id="IPR006195">
    <property type="entry name" value="aa-tRNA-synth_II"/>
</dbReference>
<dbReference type="InterPro" id="IPR045864">
    <property type="entry name" value="aa-tRNA-synth_II/BPL/LPL"/>
</dbReference>
<dbReference type="InterPro" id="IPR004529">
    <property type="entry name" value="Phe-tRNA-synth_IIc_asu"/>
</dbReference>
<dbReference type="InterPro" id="IPR004188">
    <property type="entry name" value="Phe-tRNA_ligase_II_N"/>
</dbReference>
<dbReference type="InterPro" id="IPR022911">
    <property type="entry name" value="Phe_tRNA_ligase_alpha1_bac"/>
</dbReference>
<dbReference type="InterPro" id="IPR002319">
    <property type="entry name" value="Phenylalanyl-tRNA_Synthase"/>
</dbReference>
<dbReference type="InterPro" id="IPR010978">
    <property type="entry name" value="tRNA-bd_arm"/>
</dbReference>
<dbReference type="NCBIfam" id="TIGR00468">
    <property type="entry name" value="pheS"/>
    <property type="match status" value="1"/>
</dbReference>
<dbReference type="PANTHER" id="PTHR11538:SF41">
    <property type="entry name" value="PHENYLALANINE--TRNA LIGASE, MITOCHONDRIAL"/>
    <property type="match status" value="1"/>
</dbReference>
<dbReference type="PANTHER" id="PTHR11538">
    <property type="entry name" value="PHENYLALANYL-TRNA SYNTHETASE"/>
    <property type="match status" value="1"/>
</dbReference>
<dbReference type="Pfam" id="PF02912">
    <property type="entry name" value="Phe_tRNA-synt_N"/>
    <property type="match status" value="1"/>
</dbReference>
<dbReference type="Pfam" id="PF01409">
    <property type="entry name" value="tRNA-synt_2d"/>
    <property type="match status" value="1"/>
</dbReference>
<dbReference type="SUPFAM" id="SSF55681">
    <property type="entry name" value="Class II aaRS and biotin synthetases"/>
    <property type="match status" value="1"/>
</dbReference>
<dbReference type="SUPFAM" id="SSF46589">
    <property type="entry name" value="tRNA-binding arm"/>
    <property type="match status" value="1"/>
</dbReference>
<dbReference type="PROSITE" id="PS50862">
    <property type="entry name" value="AA_TRNA_LIGASE_II"/>
    <property type="match status" value="1"/>
</dbReference>
<reference key="1">
    <citation type="journal article" date="2004" name="Science">
        <title>The complete genome sequence of Propionibacterium acnes, a commensal of human skin.</title>
        <authorList>
            <person name="Brueggemann H."/>
            <person name="Henne A."/>
            <person name="Hoster F."/>
            <person name="Liesegang H."/>
            <person name="Wiezer A."/>
            <person name="Strittmatter A."/>
            <person name="Hujer S."/>
            <person name="Duerre P."/>
            <person name="Gottschalk G."/>
        </authorList>
    </citation>
    <scope>NUCLEOTIDE SEQUENCE [LARGE SCALE GENOMIC DNA]</scope>
    <source>
        <strain>DSM 16379 / KPA171202</strain>
    </source>
</reference>
<organism>
    <name type="scientific">Cutibacterium acnes (strain DSM 16379 / KPA171202)</name>
    <name type="common">Propionibacterium acnes</name>
    <dbReference type="NCBI Taxonomy" id="267747"/>
    <lineage>
        <taxon>Bacteria</taxon>
        <taxon>Bacillati</taxon>
        <taxon>Actinomycetota</taxon>
        <taxon>Actinomycetes</taxon>
        <taxon>Propionibacteriales</taxon>
        <taxon>Propionibacteriaceae</taxon>
        <taxon>Cutibacterium</taxon>
    </lineage>
</organism>